<keyword id="KW-1048">Host nucleus</keyword>
<keyword id="KW-0479">Metal-binding</keyword>
<keyword id="KW-1185">Reference proteome</keyword>
<keyword id="KW-0678">Repressor</keyword>
<keyword id="KW-0964">Secreted</keyword>
<keyword id="KW-0732">Signal</keyword>
<keyword id="KW-0804">Transcription</keyword>
<keyword id="KW-0805">Transcription regulation</keyword>
<keyword id="KW-0843">Virulence</keyword>
<keyword id="KW-0862">Zinc</keyword>
<keyword id="KW-0863">Zinc-finger</keyword>
<dbReference type="EMBL" id="CM000230">
    <property type="protein sequence ID" value="EAQ71642.1"/>
    <property type="molecule type" value="Genomic_DNA"/>
</dbReference>
<dbReference type="EMBL" id="CM001237">
    <property type="protein sequence ID" value="EHA45816.1"/>
    <property type="molecule type" value="Genomic_DNA"/>
</dbReference>
<dbReference type="RefSeq" id="XP_003720559.1">
    <property type="nucleotide sequence ID" value="XM_003720511.1"/>
</dbReference>
<dbReference type="EnsemblFungi" id="MGG_10280T0">
    <property type="protein sequence ID" value="MGG_10280T0"/>
    <property type="gene ID" value="MGG_10280"/>
</dbReference>
<dbReference type="GeneID" id="2681932"/>
<dbReference type="KEGG" id="mgr:MGG_10280"/>
<dbReference type="VEuPathDB" id="FungiDB:MGG_10280"/>
<dbReference type="HOGENOM" id="CLU_2171573_0_0_1"/>
<dbReference type="InParanoid" id="G5EHQ6"/>
<dbReference type="OrthoDB" id="654211at2759"/>
<dbReference type="Proteomes" id="UP000009058">
    <property type="component" value="Chromosome 7"/>
</dbReference>
<dbReference type="GO" id="GO:0005576">
    <property type="term" value="C:extracellular region"/>
    <property type="evidence" value="ECO:0007669"/>
    <property type="project" value="UniProtKB-SubCell"/>
</dbReference>
<dbReference type="GO" id="GO:0042025">
    <property type="term" value="C:host cell nucleus"/>
    <property type="evidence" value="ECO:0000269"/>
    <property type="project" value="PHI-base"/>
</dbReference>
<dbReference type="GO" id="GO:0085039">
    <property type="term" value="C:hyphal membrane"/>
    <property type="evidence" value="ECO:0000269"/>
    <property type="project" value="PHI-base"/>
</dbReference>
<dbReference type="GO" id="GO:0001227">
    <property type="term" value="F:DNA-binding transcription repressor activity, RNA polymerase II-specific"/>
    <property type="evidence" value="ECO:0000269"/>
    <property type="project" value="PHI-base"/>
</dbReference>
<dbReference type="GO" id="GO:0000979">
    <property type="term" value="F:RNA polymerase II core promoter sequence-specific DNA binding"/>
    <property type="evidence" value="ECO:0000314"/>
    <property type="project" value="PHI-base"/>
</dbReference>
<dbReference type="GO" id="GO:0008270">
    <property type="term" value="F:zinc ion binding"/>
    <property type="evidence" value="ECO:0007669"/>
    <property type="project" value="UniProtKB-KW"/>
</dbReference>
<dbReference type="GO" id="GO:0140403">
    <property type="term" value="P:effector-mediated suppression of host innate immune response"/>
    <property type="evidence" value="ECO:0000314"/>
    <property type="project" value="PHI-base"/>
</dbReference>
<dbReference type="InterPro" id="IPR013087">
    <property type="entry name" value="Znf_C2H2_type"/>
</dbReference>
<dbReference type="PROSITE" id="PS50157">
    <property type="entry name" value="ZINC_FINGER_C2H2_2"/>
    <property type="match status" value="1"/>
</dbReference>
<gene>
    <name evidence="5" type="primary">HTR2</name>
    <name type="ORF">MGCH7_ch7g1049</name>
    <name type="ORF">MGG_10280</name>
</gene>
<protein>
    <recommendedName>
        <fullName evidence="5">Host transcription reprogramming factor 2</fullName>
    </recommendedName>
    <alternativeName>
        <fullName evidence="5">Secreted nuclear effector HTR2</fullName>
    </alternativeName>
</protein>
<sequence>MHLKASSILALLVIGANAYPASANSAAALVPEPQQPEAPAVAGSTVGAQVDIHHPRLEARYGRDEPQIMCGYCGKRFWNKPDLEKHIKLKPSKGGHKGQPYKEHSWNRPT</sequence>
<accession>G5EHQ6</accession>
<proteinExistence type="evidence at transcript level"/>
<evidence type="ECO:0000255" key="1"/>
<evidence type="ECO:0000255" key="2">
    <source>
        <dbReference type="PROSITE-ProRule" id="PRU00042"/>
    </source>
</evidence>
<evidence type="ECO:0000256" key="3">
    <source>
        <dbReference type="SAM" id="MobiDB-lite"/>
    </source>
</evidence>
<evidence type="ECO:0000269" key="4">
    <source>
    </source>
</evidence>
<evidence type="ECO:0000303" key="5">
    <source>
    </source>
</evidence>
<comment type="function">
    <text evidence="4">Secreted effector that translocates into the nuclei of host cells to reprogram the expression of immunity-associated genes by binding to effector binding elements (EBEs) in rice (PubMed:33203871). Binds the 5'-CCACCTCC-3' EBE of promoters from targeted rice genes and probably recruits a yet to be determined host repressor (PubMed:33203871). Causes ambivalent immunity with increased susceptibility to the hemibiotrophic pathogens Magnaporthe oryzae and Xanthomonas oryzae pv. oryzae, but enhances resistance to Cochliobolus miyabeanus, a necrotrophic pathogen (PubMed:33203871).</text>
</comment>
<comment type="subcellular location">
    <subcellularLocation>
        <location evidence="4">Secreted</location>
    </subcellularLocation>
    <subcellularLocation>
        <location evidence="4">Host nucleus</location>
    </subcellularLocation>
    <text evidence="4">Secreted via the biotrophic interfacial complex (BIC) and translocated into the nuclei of initially penetrated and surrounding cells.</text>
</comment>
<comment type="induction">
    <text evidence="4">Expressed during multiple stages of host plant infection, including prepenetration, early biotrophy, late biotrophy, transition and necrotrophy.</text>
</comment>
<comment type="disruption phenotype">
    <text evidence="4">Does not affect vegetative growth, conidiation, conidial germination, nor appressorium formation, but leads to significantly reduced virulence to rice.</text>
</comment>
<comment type="online information" name="Protein Spotlight">
    <link uri="https://www.proteinspotlight.org/back_issues/247/"/>
    <text>Sapped - Issue 247 of May 2022</text>
</comment>
<name>HTR2_PYRO7</name>
<feature type="signal peptide" evidence="1">
    <location>
        <begin position="1"/>
        <end position="18"/>
    </location>
</feature>
<feature type="chain" id="PRO_5010834276" description="Host transcription reprogramming factor 2">
    <location>
        <begin position="19"/>
        <end position="110"/>
    </location>
</feature>
<feature type="zinc finger region" description="C2H2-type" evidence="2">
    <location>
        <begin position="68"/>
        <end position="96"/>
    </location>
</feature>
<feature type="region of interest" description="Disordered" evidence="3">
    <location>
        <begin position="88"/>
        <end position="110"/>
    </location>
</feature>
<feature type="compositionally biased region" description="Basic and acidic residues" evidence="3">
    <location>
        <begin position="100"/>
        <end position="110"/>
    </location>
</feature>
<reference key="1">
    <citation type="journal article" date="2005" name="Nature">
        <title>The genome sequence of the rice blast fungus Magnaporthe grisea.</title>
        <authorList>
            <person name="Dean R.A."/>
            <person name="Talbot N.J."/>
            <person name="Ebbole D.J."/>
            <person name="Farman M.L."/>
            <person name="Mitchell T.K."/>
            <person name="Orbach M.J."/>
            <person name="Thon M.R."/>
            <person name="Kulkarni R."/>
            <person name="Xu J.-R."/>
            <person name="Pan H."/>
            <person name="Read N.D."/>
            <person name="Lee Y.-H."/>
            <person name="Carbone I."/>
            <person name="Brown D."/>
            <person name="Oh Y.Y."/>
            <person name="Donofrio N."/>
            <person name="Jeong J.S."/>
            <person name="Soanes D.M."/>
            <person name="Djonovic S."/>
            <person name="Kolomiets E."/>
            <person name="Rehmeyer C."/>
            <person name="Li W."/>
            <person name="Harding M."/>
            <person name="Kim S."/>
            <person name="Lebrun M.-H."/>
            <person name="Bohnert H."/>
            <person name="Coughlan S."/>
            <person name="Butler J."/>
            <person name="Calvo S.E."/>
            <person name="Ma L.-J."/>
            <person name="Nicol R."/>
            <person name="Purcell S."/>
            <person name="Nusbaum C."/>
            <person name="Galagan J.E."/>
            <person name="Birren B.W."/>
        </authorList>
    </citation>
    <scope>NUCLEOTIDE SEQUENCE [LARGE SCALE GENOMIC DNA]</scope>
    <source>
        <strain>70-15 / ATCC MYA-4617 / FGSC 8958</strain>
    </source>
</reference>
<reference key="2">
    <citation type="journal article" date="2020" name="Nat. Commun.">
        <title>Two nuclear effectors of the rice blast fungus modulate host immunity via transcriptional reprogramming.</title>
        <authorList>
            <person name="Kim S."/>
            <person name="Kim C.Y."/>
            <person name="Park S.Y."/>
            <person name="Kim K.T."/>
            <person name="Jeon J."/>
            <person name="Chung H."/>
            <person name="Choi G."/>
            <person name="Kwon S."/>
            <person name="Choi J."/>
            <person name="Jeon J."/>
            <person name="Jeon J.S."/>
            <person name="Khang C.H."/>
            <person name="Kang S."/>
            <person name="Lee Y.H."/>
        </authorList>
    </citation>
    <scope>FUNCTION</scope>
    <scope>INDUCTION</scope>
    <scope>SUBCELLULAR LOCATION</scope>
    <scope>DISRUPTION PHENOTYPE</scope>
</reference>
<organism>
    <name type="scientific">Pyricularia oryzae (strain 70-15 / ATCC MYA-4617 / FGSC 8958)</name>
    <name type="common">Rice blast fungus</name>
    <name type="synonym">Magnaporthe oryzae</name>
    <dbReference type="NCBI Taxonomy" id="242507"/>
    <lineage>
        <taxon>Eukaryota</taxon>
        <taxon>Fungi</taxon>
        <taxon>Dikarya</taxon>
        <taxon>Ascomycota</taxon>
        <taxon>Pezizomycotina</taxon>
        <taxon>Sordariomycetes</taxon>
        <taxon>Sordariomycetidae</taxon>
        <taxon>Magnaporthales</taxon>
        <taxon>Pyriculariaceae</taxon>
        <taxon>Pyricularia</taxon>
    </lineage>
</organism>